<proteinExistence type="inferred from homology"/>
<reference key="1">
    <citation type="journal article" date="2007" name="PLoS ONE">
        <title>Genome sequencing shows that European isolates of Francisella tularensis subspecies tularensis are almost identical to US laboratory strain Schu S4.</title>
        <authorList>
            <person name="Chaudhuri R.R."/>
            <person name="Ren C.-P."/>
            <person name="Desmond L."/>
            <person name="Vincent G.A."/>
            <person name="Silman N.J."/>
            <person name="Brehm J.K."/>
            <person name="Elmore M.J."/>
            <person name="Hudson M.J."/>
            <person name="Forsman M."/>
            <person name="Isherwood K.E."/>
            <person name="Gurycova D."/>
            <person name="Minton N.P."/>
            <person name="Titball R.W."/>
            <person name="Pallen M.J."/>
            <person name="Vipond R."/>
        </authorList>
    </citation>
    <scope>NUCLEOTIDE SEQUENCE [LARGE SCALE GENOMIC DNA]</scope>
    <source>
        <strain>FSC 198</strain>
    </source>
</reference>
<gene>
    <name evidence="1" type="primary">pyrG</name>
    <name type="ordered locus">FTF0374c</name>
</gene>
<evidence type="ECO:0000255" key="1">
    <source>
        <dbReference type="HAMAP-Rule" id="MF_01227"/>
    </source>
</evidence>
<protein>
    <recommendedName>
        <fullName evidence="1">CTP synthase</fullName>
        <ecNumber evidence="1">6.3.4.2</ecNumber>
    </recommendedName>
    <alternativeName>
        <fullName evidence="1">Cytidine 5'-triphosphate synthase</fullName>
    </alternativeName>
    <alternativeName>
        <fullName evidence="1">Cytidine triphosphate synthetase</fullName>
        <shortName evidence="1">CTP synthetase</shortName>
        <shortName evidence="1">CTPS</shortName>
    </alternativeName>
    <alternativeName>
        <fullName evidence="1">UTP--ammonia ligase</fullName>
    </alternativeName>
</protein>
<accession>Q14J73</accession>
<sequence>MNSNTKIIFVTGGVVSSLGKGVTAASLATLLESRGLNVTMMKLDPYINVDPGTMSPLQHGEVFVTEDGAETDLDLGHYERFIRNKMTQANNFTTGKVYQSVLRRERKGDYLGATIQVIPHITDEIKRRICSGIADDVDVAIVEIGGTVGDIESQPFLEAIRQLRIELGRNRTLFVHLTLLPYIKVAGEIKTKPTQHSVKELRGIGIQADVLVCRCEKKFDDSEKRKIALFTNVDQDCIFTAEDVDTIYEVPLKYNQQGFDAKLVELLNLNAKEADLSEWQNVVNTIRDVKGEVTIAMVGKYVSLTEAYKSLNEALYNAGYKKGVKVKIKFVDSEDVNENNVESYFKDVAAILVPGGFGSRGVEGKIISIKYARENQIPFLGICLGMQLAVIEYARNILGIKDAHSSELEPTTANPVIGLITEWQAEDGTVHQRTHSSDLGGTMRLGGYKCVLKQGSRAREIYQADEVVERHRHRYEVNSNYVERLEEAGLIFSGRSEDNKLMELIEIPQHKWFIACQAHPEFTSTPRYGHKLFESYIQAAIENSNN</sequence>
<feature type="chain" id="PRO_0000266122" description="CTP synthase">
    <location>
        <begin position="1"/>
        <end position="546"/>
    </location>
</feature>
<feature type="domain" description="Glutamine amidotransferase type-1" evidence="1">
    <location>
        <begin position="294"/>
        <end position="546"/>
    </location>
</feature>
<feature type="region of interest" description="Amidoligase domain" evidence="1">
    <location>
        <begin position="1"/>
        <end position="269"/>
    </location>
</feature>
<feature type="active site" description="Nucleophile; for glutamine hydrolysis" evidence="1">
    <location>
        <position position="383"/>
    </location>
</feature>
<feature type="active site" evidence="1">
    <location>
        <position position="519"/>
    </location>
</feature>
<feature type="active site" evidence="1">
    <location>
        <position position="521"/>
    </location>
</feature>
<feature type="binding site" evidence="1">
    <location>
        <position position="16"/>
    </location>
    <ligand>
        <name>CTP</name>
        <dbReference type="ChEBI" id="CHEBI:37563"/>
        <note>allosteric inhibitor</note>
    </ligand>
</feature>
<feature type="binding site" evidence="1">
    <location>
        <position position="16"/>
    </location>
    <ligand>
        <name>UTP</name>
        <dbReference type="ChEBI" id="CHEBI:46398"/>
    </ligand>
</feature>
<feature type="binding site" evidence="1">
    <location>
        <begin position="17"/>
        <end position="22"/>
    </location>
    <ligand>
        <name>ATP</name>
        <dbReference type="ChEBI" id="CHEBI:30616"/>
    </ligand>
</feature>
<feature type="binding site" evidence="1">
    <location>
        <position position="74"/>
    </location>
    <ligand>
        <name>ATP</name>
        <dbReference type="ChEBI" id="CHEBI:30616"/>
    </ligand>
</feature>
<feature type="binding site" evidence="1">
    <location>
        <position position="74"/>
    </location>
    <ligand>
        <name>Mg(2+)</name>
        <dbReference type="ChEBI" id="CHEBI:18420"/>
    </ligand>
</feature>
<feature type="binding site" evidence="1">
    <location>
        <position position="143"/>
    </location>
    <ligand>
        <name>Mg(2+)</name>
        <dbReference type="ChEBI" id="CHEBI:18420"/>
    </ligand>
</feature>
<feature type="binding site" evidence="1">
    <location>
        <begin position="150"/>
        <end position="152"/>
    </location>
    <ligand>
        <name>CTP</name>
        <dbReference type="ChEBI" id="CHEBI:37563"/>
        <note>allosteric inhibitor</note>
    </ligand>
</feature>
<feature type="binding site" evidence="1">
    <location>
        <begin position="190"/>
        <end position="195"/>
    </location>
    <ligand>
        <name>CTP</name>
        <dbReference type="ChEBI" id="CHEBI:37563"/>
        <note>allosteric inhibitor</note>
    </ligand>
</feature>
<feature type="binding site" evidence="1">
    <location>
        <begin position="190"/>
        <end position="195"/>
    </location>
    <ligand>
        <name>UTP</name>
        <dbReference type="ChEBI" id="CHEBI:46398"/>
    </ligand>
</feature>
<feature type="binding site" evidence="1">
    <location>
        <position position="226"/>
    </location>
    <ligand>
        <name>CTP</name>
        <dbReference type="ChEBI" id="CHEBI:37563"/>
        <note>allosteric inhibitor</note>
    </ligand>
</feature>
<feature type="binding site" evidence="1">
    <location>
        <position position="226"/>
    </location>
    <ligand>
        <name>UTP</name>
        <dbReference type="ChEBI" id="CHEBI:46398"/>
    </ligand>
</feature>
<feature type="binding site" evidence="1">
    <location>
        <position position="356"/>
    </location>
    <ligand>
        <name>L-glutamine</name>
        <dbReference type="ChEBI" id="CHEBI:58359"/>
    </ligand>
</feature>
<feature type="binding site" evidence="1">
    <location>
        <begin position="384"/>
        <end position="387"/>
    </location>
    <ligand>
        <name>L-glutamine</name>
        <dbReference type="ChEBI" id="CHEBI:58359"/>
    </ligand>
</feature>
<feature type="binding site" evidence="1">
    <location>
        <position position="407"/>
    </location>
    <ligand>
        <name>L-glutamine</name>
        <dbReference type="ChEBI" id="CHEBI:58359"/>
    </ligand>
</feature>
<feature type="binding site" evidence="1">
    <location>
        <position position="474"/>
    </location>
    <ligand>
        <name>L-glutamine</name>
        <dbReference type="ChEBI" id="CHEBI:58359"/>
    </ligand>
</feature>
<dbReference type="EC" id="6.3.4.2" evidence="1"/>
<dbReference type="EMBL" id="AM286280">
    <property type="protein sequence ID" value="CAL08390.1"/>
    <property type="molecule type" value="Genomic_DNA"/>
</dbReference>
<dbReference type="RefSeq" id="WP_003020026.1">
    <property type="nucleotide sequence ID" value="NC_008245.1"/>
</dbReference>
<dbReference type="SMR" id="Q14J73"/>
<dbReference type="KEGG" id="ftf:FTF0374c"/>
<dbReference type="HOGENOM" id="CLU_011675_5_0_6"/>
<dbReference type="UniPathway" id="UPA00159">
    <property type="reaction ID" value="UER00277"/>
</dbReference>
<dbReference type="GO" id="GO:0005829">
    <property type="term" value="C:cytosol"/>
    <property type="evidence" value="ECO:0007669"/>
    <property type="project" value="TreeGrafter"/>
</dbReference>
<dbReference type="GO" id="GO:0005524">
    <property type="term" value="F:ATP binding"/>
    <property type="evidence" value="ECO:0007669"/>
    <property type="project" value="UniProtKB-KW"/>
</dbReference>
<dbReference type="GO" id="GO:0003883">
    <property type="term" value="F:CTP synthase activity"/>
    <property type="evidence" value="ECO:0007669"/>
    <property type="project" value="UniProtKB-UniRule"/>
</dbReference>
<dbReference type="GO" id="GO:0004359">
    <property type="term" value="F:glutaminase activity"/>
    <property type="evidence" value="ECO:0007669"/>
    <property type="project" value="RHEA"/>
</dbReference>
<dbReference type="GO" id="GO:0042802">
    <property type="term" value="F:identical protein binding"/>
    <property type="evidence" value="ECO:0007669"/>
    <property type="project" value="TreeGrafter"/>
</dbReference>
<dbReference type="GO" id="GO:0046872">
    <property type="term" value="F:metal ion binding"/>
    <property type="evidence" value="ECO:0007669"/>
    <property type="project" value="UniProtKB-KW"/>
</dbReference>
<dbReference type="GO" id="GO:0044210">
    <property type="term" value="P:'de novo' CTP biosynthetic process"/>
    <property type="evidence" value="ECO:0007669"/>
    <property type="project" value="UniProtKB-UniRule"/>
</dbReference>
<dbReference type="GO" id="GO:0019856">
    <property type="term" value="P:pyrimidine nucleobase biosynthetic process"/>
    <property type="evidence" value="ECO:0007669"/>
    <property type="project" value="TreeGrafter"/>
</dbReference>
<dbReference type="CDD" id="cd03113">
    <property type="entry name" value="CTPS_N"/>
    <property type="match status" value="1"/>
</dbReference>
<dbReference type="CDD" id="cd01746">
    <property type="entry name" value="GATase1_CTP_Synthase"/>
    <property type="match status" value="1"/>
</dbReference>
<dbReference type="FunFam" id="3.40.50.300:FF:000009">
    <property type="entry name" value="CTP synthase"/>
    <property type="match status" value="1"/>
</dbReference>
<dbReference type="FunFam" id="3.40.50.880:FF:000002">
    <property type="entry name" value="CTP synthase"/>
    <property type="match status" value="1"/>
</dbReference>
<dbReference type="Gene3D" id="3.40.50.880">
    <property type="match status" value="1"/>
</dbReference>
<dbReference type="Gene3D" id="3.40.50.300">
    <property type="entry name" value="P-loop containing nucleotide triphosphate hydrolases"/>
    <property type="match status" value="1"/>
</dbReference>
<dbReference type="HAMAP" id="MF_01227">
    <property type="entry name" value="PyrG"/>
    <property type="match status" value="1"/>
</dbReference>
<dbReference type="InterPro" id="IPR029062">
    <property type="entry name" value="Class_I_gatase-like"/>
</dbReference>
<dbReference type="InterPro" id="IPR004468">
    <property type="entry name" value="CTP_synthase"/>
</dbReference>
<dbReference type="InterPro" id="IPR017456">
    <property type="entry name" value="CTP_synthase_N"/>
</dbReference>
<dbReference type="InterPro" id="IPR017926">
    <property type="entry name" value="GATASE"/>
</dbReference>
<dbReference type="InterPro" id="IPR033828">
    <property type="entry name" value="GATase1_CTP_Synthase"/>
</dbReference>
<dbReference type="InterPro" id="IPR027417">
    <property type="entry name" value="P-loop_NTPase"/>
</dbReference>
<dbReference type="NCBIfam" id="NF003792">
    <property type="entry name" value="PRK05380.1"/>
    <property type="match status" value="1"/>
</dbReference>
<dbReference type="NCBIfam" id="TIGR00337">
    <property type="entry name" value="PyrG"/>
    <property type="match status" value="1"/>
</dbReference>
<dbReference type="PANTHER" id="PTHR11550">
    <property type="entry name" value="CTP SYNTHASE"/>
    <property type="match status" value="1"/>
</dbReference>
<dbReference type="PANTHER" id="PTHR11550:SF0">
    <property type="entry name" value="CTP SYNTHASE-RELATED"/>
    <property type="match status" value="1"/>
</dbReference>
<dbReference type="Pfam" id="PF06418">
    <property type="entry name" value="CTP_synth_N"/>
    <property type="match status" value="1"/>
</dbReference>
<dbReference type="Pfam" id="PF00117">
    <property type="entry name" value="GATase"/>
    <property type="match status" value="1"/>
</dbReference>
<dbReference type="SUPFAM" id="SSF52317">
    <property type="entry name" value="Class I glutamine amidotransferase-like"/>
    <property type="match status" value="1"/>
</dbReference>
<dbReference type="SUPFAM" id="SSF52540">
    <property type="entry name" value="P-loop containing nucleoside triphosphate hydrolases"/>
    <property type="match status" value="1"/>
</dbReference>
<dbReference type="PROSITE" id="PS51273">
    <property type="entry name" value="GATASE_TYPE_1"/>
    <property type="match status" value="1"/>
</dbReference>
<organism>
    <name type="scientific">Francisella tularensis subsp. tularensis (strain FSC 198)</name>
    <dbReference type="NCBI Taxonomy" id="393115"/>
    <lineage>
        <taxon>Bacteria</taxon>
        <taxon>Pseudomonadati</taxon>
        <taxon>Pseudomonadota</taxon>
        <taxon>Gammaproteobacteria</taxon>
        <taxon>Thiotrichales</taxon>
        <taxon>Francisellaceae</taxon>
        <taxon>Francisella</taxon>
    </lineage>
</organism>
<keyword id="KW-0067">ATP-binding</keyword>
<keyword id="KW-0315">Glutamine amidotransferase</keyword>
<keyword id="KW-0436">Ligase</keyword>
<keyword id="KW-0460">Magnesium</keyword>
<keyword id="KW-0479">Metal-binding</keyword>
<keyword id="KW-0547">Nucleotide-binding</keyword>
<keyword id="KW-0665">Pyrimidine biosynthesis</keyword>
<name>PYRG_FRAT1</name>
<comment type="function">
    <text evidence="1">Catalyzes the ATP-dependent amination of UTP to CTP with either L-glutamine or ammonia as the source of nitrogen. Regulates intracellular CTP levels through interactions with the four ribonucleotide triphosphates.</text>
</comment>
<comment type="catalytic activity">
    <reaction evidence="1">
        <text>UTP + L-glutamine + ATP + H2O = CTP + L-glutamate + ADP + phosphate + 2 H(+)</text>
        <dbReference type="Rhea" id="RHEA:26426"/>
        <dbReference type="ChEBI" id="CHEBI:15377"/>
        <dbReference type="ChEBI" id="CHEBI:15378"/>
        <dbReference type="ChEBI" id="CHEBI:29985"/>
        <dbReference type="ChEBI" id="CHEBI:30616"/>
        <dbReference type="ChEBI" id="CHEBI:37563"/>
        <dbReference type="ChEBI" id="CHEBI:43474"/>
        <dbReference type="ChEBI" id="CHEBI:46398"/>
        <dbReference type="ChEBI" id="CHEBI:58359"/>
        <dbReference type="ChEBI" id="CHEBI:456216"/>
        <dbReference type="EC" id="6.3.4.2"/>
    </reaction>
</comment>
<comment type="catalytic activity">
    <reaction evidence="1">
        <text>L-glutamine + H2O = L-glutamate + NH4(+)</text>
        <dbReference type="Rhea" id="RHEA:15889"/>
        <dbReference type="ChEBI" id="CHEBI:15377"/>
        <dbReference type="ChEBI" id="CHEBI:28938"/>
        <dbReference type="ChEBI" id="CHEBI:29985"/>
        <dbReference type="ChEBI" id="CHEBI:58359"/>
    </reaction>
</comment>
<comment type="catalytic activity">
    <reaction evidence="1">
        <text>UTP + NH4(+) + ATP = CTP + ADP + phosphate + 2 H(+)</text>
        <dbReference type="Rhea" id="RHEA:16597"/>
        <dbReference type="ChEBI" id="CHEBI:15378"/>
        <dbReference type="ChEBI" id="CHEBI:28938"/>
        <dbReference type="ChEBI" id="CHEBI:30616"/>
        <dbReference type="ChEBI" id="CHEBI:37563"/>
        <dbReference type="ChEBI" id="CHEBI:43474"/>
        <dbReference type="ChEBI" id="CHEBI:46398"/>
        <dbReference type="ChEBI" id="CHEBI:456216"/>
    </reaction>
</comment>
<comment type="activity regulation">
    <text evidence="1">Allosterically activated by GTP, when glutamine is the substrate; GTP has no effect on the reaction when ammonia is the substrate. The allosteric effector GTP functions by stabilizing the protein conformation that binds the tetrahedral intermediate(s) formed during glutamine hydrolysis. Inhibited by the product CTP, via allosteric rather than competitive inhibition.</text>
</comment>
<comment type="pathway">
    <text evidence="1">Pyrimidine metabolism; CTP biosynthesis via de novo pathway; CTP from UDP: step 2/2.</text>
</comment>
<comment type="subunit">
    <text evidence="1">Homotetramer.</text>
</comment>
<comment type="miscellaneous">
    <text evidence="1">CTPSs have evolved a hybrid strategy for distinguishing between UTP and CTP. The overlapping regions of the product feedback inhibitory and substrate sites recognize a common feature in both compounds, the triphosphate moiety. To differentiate isosteric substrate and product pyrimidine rings, an additional pocket far from the expected kinase/ligase catalytic site, specifically recognizes the cytosine and ribose portions of the product inhibitor.</text>
</comment>
<comment type="similarity">
    <text evidence="1">Belongs to the CTP synthase family.</text>
</comment>